<feature type="chain" id="PRO_1000212206" description="Chaperonin GroEL">
    <location>
        <begin position="1"/>
        <end position="548"/>
    </location>
</feature>
<feature type="binding site" evidence="1">
    <location>
        <begin position="30"/>
        <end position="33"/>
    </location>
    <ligand>
        <name>ATP</name>
        <dbReference type="ChEBI" id="CHEBI:30616"/>
    </ligand>
</feature>
<feature type="binding site" evidence="1">
    <location>
        <position position="51"/>
    </location>
    <ligand>
        <name>ATP</name>
        <dbReference type="ChEBI" id="CHEBI:30616"/>
    </ligand>
</feature>
<feature type="binding site" evidence="1">
    <location>
        <begin position="87"/>
        <end position="91"/>
    </location>
    <ligand>
        <name>ATP</name>
        <dbReference type="ChEBI" id="CHEBI:30616"/>
    </ligand>
</feature>
<feature type="binding site" evidence="1">
    <location>
        <position position="415"/>
    </location>
    <ligand>
        <name>ATP</name>
        <dbReference type="ChEBI" id="CHEBI:30616"/>
    </ligand>
</feature>
<feature type="binding site" evidence="1">
    <location>
        <begin position="479"/>
        <end position="481"/>
    </location>
    <ligand>
        <name>ATP</name>
        <dbReference type="ChEBI" id="CHEBI:30616"/>
    </ligand>
</feature>
<feature type="binding site" evidence="1">
    <location>
        <position position="495"/>
    </location>
    <ligand>
        <name>ATP</name>
        <dbReference type="ChEBI" id="CHEBI:30616"/>
    </ligand>
</feature>
<organism>
    <name type="scientific">Pseudomonas fluorescens (strain SBW25)</name>
    <dbReference type="NCBI Taxonomy" id="216595"/>
    <lineage>
        <taxon>Bacteria</taxon>
        <taxon>Pseudomonadati</taxon>
        <taxon>Pseudomonadota</taxon>
        <taxon>Gammaproteobacteria</taxon>
        <taxon>Pseudomonadales</taxon>
        <taxon>Pseudomonadaceae</taxon>
        <taxon>Pseudomonas</taxon>
    </lineage>
</organism>
<comment type="function">
    <text evidence="1">Together with its co-chaperonin GroES, plays an essential role in assisting protein folding. The GroEL-GroES system forms a nano-cage that allows encapsulation of the non-native substrate proteins and provides a physical environment optimized to promote and accelerate protein folding.</text>
</comment>
<comment type="catalytic activity">
    <reaction evidence="1">
        <text>ATP + H2O + a folded polypeptide = ADP + phosphate + an unfolded polypeptide.</text>
        <dbReference type="EC" id="5.6.1.7"/>
    </reaction>
</comment>
<comment type="subunit">
    <text evidence="1">Forms a cylinder of 14 subunits composed of two heptameric rings stacked back-to-back. Interacts with the co-chaperonin GroES.</text>
</comment>
<comment type="subcellular location">
    <subcellularLocation>
        <location evidence="1">Cytoplasm</location>
    </subcellularLocation>
</comment>
<comment type="similarity">
    <text evidence="1">Belongs to the chaperonin (HSP60) family.</text>
</comment>
<keyword id="KW-0067">ATP-binding</keyword>
<keyword id="KW-0143">Chaperone</keyword>
<keyword id="KW-0963">Cytoplasm</keyword>
<keyword id="KW-0413">Isomerase</keyword>
<keyword id="KW-0547">Nucleotide-binding</keyword>
<keyword id="KW-0346">Stress response</keyword>
<proteinExistence type="inferred from homology"/>
<sequence length="548" mass="56966">MAAKEVKFGDSARKKMLTGVNVLADAVKATLGPKGRNVIIEKSFGAPTITKDGVSVAKEIELEDRFENMGAQLVKDVASRANDDAGDGTTTATVLAQAIVNEGYKAVAAGMNPMDLKRGIDKATIAIVAELKNLSKPCADTKAIAQVGTISANSDSSIGDIIAEAMEKVGKEGVITVEEGTGLENELSVVEGMQFDRGYLSPYFVNKPETMVAELDSPLILLVDKKISNIREMLPVLEAVAKAGRPLLIVSEDVEGEALATLVVNNMRGIVKVAAVKAPGFGDRRKAMLQDIAVLTGGTVISEEIGLSLESATLENLGSAKRVTISKENTIIVDGAGVEQDIQARITQIRAQVAETSSDYDREKLQERLAKLSGGVAVIKVGAGSEVEMKEKKARVEDALHATRAAVEEGVVPGGGVALIRALEALTNLTGDNADQNVGIAVLRRAVEAPLRQIAANSGDEPSVVVNEVKNGKGNYGYNAATGVYGDMIEMGILDPTKVTRSALQAAASIGGLILTTEAAIADKPKAEGAGGGGMPDMGGMGGMGGMM</sequence>
<dbReference type="EC" id="5.6.1.7" evidence="1"/>
<dbReference type="EMBL" id="AM181176">
    <property type="protein sequence ID" value="CAY51939.1"/>
    <property type="molecule type" value="Genomic_DNA"/>
</dbReference>
<dbReference type="RefSeq" id="WP_015885679.1">
    <property type="nucleotide sequence ID" value="NC_012660.1"/>
</dbReference>
<dbReference type="SMR" id="C3K1A0"/>
<dbReference type="STRING" id="294.SRM1_04436"/>
<dbReference type="PATRIC" id="fig|216595.4.peg.5122"/>
<dbReference type="eggNOG" id="COG0459">
    <property type="taxonomic scope" value="Bacteria"/>
</dbReference>
<dbReference type="HOGENOM" id="CLU_016503_3_0_6"/>
<dbReference type="OrthoDB" id="9766614at2"/>
<dbReference type="GO" id="GO:0005737">
    <property type="term" value="C:cytoplasm"/>
    <property type="evidence" value="ECO:0007669"/>
    <property type="project" value="UniProtKB-SubCell"/>
</dbReference>
<dbReference type="GO" id="GO:0005524">
    <property type="term" value="F:ATP binding"/>
    <property type="evidence" value="ECO:0007669"/>
    <property type="project" value="UniProtKB-UniRule"/>
</dbReference>
<dbReference type="GO" id="GO:0140662">
    <property type="term" value="F:ATP-dependent protein folding chaperone"/>
    <property type="evidence" value="ECO:0007669"/>
    <property type="project" value="InterPro"/>
</dbReference>
<dbReference type="GO" id="GO:0016853">
    <property type="term" value="F:isomerase activity"/>
    <property type="evidence" value="ECO:0007669"/>
    <property type="project" value="UniProtKB-KW"/>
</dbReference>
<dbReference type="GO" id="GO:0051082">
    <property type="term" value="F:unfolded protein binding"/>
    <property type="evidence" value="ECO:0007669"/>
    <property type="project" value="UniProtKB-UniRule"/>
</dbReference>
<dbReference type="GO" id="GO:0042026">
    <property type="term" value="P:protein refolding"/>
    <property type="evidence" value="ECO:0007669"/>
    <property type="project" value="UniProtKB-UniRule"/>
</dbReference>
<dbReference type="CDD" id="cd03344">
    <property type="entry name" value="GroEL"/>
    <property type="match status" value="1"/>
</dbReference>
<dbReference type="FunFam" id="1.10.560.10:FF:000001">
    <property type="entry name" value="60 kDa chaperonin"/>
    <property type="match status" value="1"/>
</dbReference>
<dbReference type="FunFam" id="3.50.7.10:FF:000001">
    <property type="entry name" value="60 kDa chaperonin"/>
    <property type="match status" value="1"/>
</dbReference>
<dbReference type="Gene3D" id="3.50.7.10">
    <property type="entry name" value="GroEL"/>
    <property type="match status" value="1"/>
</dbReference>
<dbReference type="Gene3D" id="1.10.560.10">
    <property type="entry name" value="GroEL-like equatorial domain"/>
    <property type="match status" value="1"/>
</dbReference>
<dbReference type="Gene3D" id="3.30.260.10">
    <property type="entry name" value="TCP-1-like chaperonin intermediate domain"/>
    <property type="match status" value="1"/>
</dbReference>
<dbReference type="HAMAP" id="MF_00600">
    <property type="entry name" value="CH60"/>
    <property type="match status" value="1"/>
</dbReference>
<dbReference type="InterPro" id="IPR018370">
    <property type="entry name" value="Chaperonin_Cpn60_CS"/>
</dbReference>
<dbReference type="InterPro" id="IPR001844">
    <property type="entry name" value="Cpn60/GroEL"/>
</dbReference>
<dbReference type="InterPro" id="IPR002423">
    <property type="entry name" value="Cpn60/GroEL/TCP-1"/>
</dbReference>
<dbReference type="InterPro" id="IPR027409">
    <property type="entry name" value="GroEL-like_apical_dom_sf"/>
</dbReference>
<dbReference type="InterPro" id="IPR027413">
    <property type="entry name" value="GROEL-like_equatorial_sf"/>
</dbReference>
<dbReference type="InterPro" id="IPR027410">
    <property type="entry name" value="TCP-1-like_intermed_sf"/>
</dbReference>
<dbReference type="NCBIfam" id="TIGR02348">
    <property type="entry name" value="GroEL"/>
    <property type="match status" value="1"/>
</dbReference>
<dbReference type="NCBIfam" id="NF000592">
    <property type="entry name" value="PRK00013.1"/>
    <property type="match status" value="1"/>
</dbReference>
<dbReference type="NCBIfam" id="NF009487">
    <property type="entry name" value="PRK12849.1"/>
    <property type="match status" value="1"/>
</dbReference>
<dbReference type="NCBIfam" id="NF009488">
    <property type="entry name" value="PRK12850.1"/>
    <property type="match status" value="1"/>
</dbReference>
<dbReference type="NCBIfam" id="NF009489">
    <property type="entry name" value="PRK12851.1"/>
    <property type="match status" value="1"/>
</dbReference>
<dbReference type="PANTHER" id="PTHR45633">
    <property type="entry name" value="60 KDA HEAT SHOCK PROTEIN, MITOCHONDRIAL"/>
    <property type="match status" value="1"/>
</dbReference>
<dbReference type="Pfam" id="PF00118">
    <property type="entry name" value="Cpn60_TCP1"/>
    <property type="match status" value="1"/>
</dbReference>
<dbReference type="PRINTS" id="PR00298">
    <property type="entry name" value="CHAPERONIN60"/>
</dbReference>
<dbReference type="SUPFAM" id="SSF52029">
    <property type="entry name" value="GroEL apical domain-like"/>
    <property type="match status" value="1"/>
</dbReference>
<dbReference type="SUPFAM" id="SSF48592">
    <property type="entry name" value="GroEL equatorial domain-like"/>
    <property type="match status" value="1"/>
</dbReference>
<dbReference type="SUPFAM" id="SSF54849">
    <property type="entry name" value="GroEL-intermediate domain like"/>
    <property type="match status" value="1"/>
</dbReference>
<dbReference type="PROSITE" id="PS00296">
    <property type="entry name" value="CHAPERONINS_CPN60"/>
    <property type="match status" value="1"/>
</dbReference>
<evidence type="ECO:0000255" key="1">
    <source>
        <dbReference type="HAMAP-Rule" id="MF_00600"/>
    </source>
</evidence>
<gene>
    <name evidence="1" type="primary">groEL</name>
    <name evidence="1" type="synonym">groL</name>
    <name type="ordered locus">PFLU_4987</name>
</gene>
<name>CH60_PSEFS</name>
<protein>
    <recommendedName>
        <fullName evidence="1">Chaperonin GroEL</fullName>
        <ecNumber evidence="1">5.6.1.7</ecNumber>
    </recommendedName>
    <alternativeName>
        <fullName evidence="1">60 kDa chaperonin</fullName>
    </alternativeName>
    <alternativeName>
        <fullName evidence="1">Chaperonin-60</fullName>
        <shortName evidence="1">Cpn60</shortName>
    </alternativeName>
</protein>
<reference key="1">
    <citation type="journal article" date="2009" name="Genome Biol.">
        <title>Genomic and genetic analyses of diversity and plant interactions of Pseudomonas fluorescens.</title>
        <authorList>
            <person name="Silby M.W."/>
            <person name="Cerdeno-Tarraga A.M."/>
            <person name="Vernikos G.S."/>
            <person name="Giddens S.R."/>
            <person name="Jackson R.W."/>
            <person name="Preston G.M."/>
            <person name="Zhang X.-X."/>
            <person name="Moon C.D."/>
            <person name="Gehrig S.M."/>
            <person name="Godfrey S.A.C."/>
            <person name="Knight C.G."/>
            <person name="Malone J.G."/>
            <person name="Robinson Z."/>
            <person name="Spiers A.J."/>
            <person name="Harris S."/>
            <person name="Challis G.L."/>
            <person name="Yaxley A.M."/>
            <person name="Harris D."/>
            <person name="Seeger K."/>
            <person name="Murphy L."/>
            <person name="Rutter S."/>
            <person name="Squares R."/>
            <person name="Quail M.A."/>
            <person name="Saunders E."/>
            <person name="Mavromatis K."/>
            <person name="Brettin T.S."/>
            <person name="Bentley S.D."/>
            <person name="Hothersall J."/>
            <person name="Stephens E."/>
            <person name="Thomas C.M."/>
            <person name="Parkhill J."/>
            <person name="Levy S.B."/>
            <person name="Rainey P.B."/>
            <person name="Thomson N.R."/>
        </authorList>
    </citation>
    <scope>NUCLEOTIDE SEQUENCE [LARGE SCALE GENOMIC DNA]</scope>
    <source>
        <strain>SBW25</strain>
    </source>
</reference>
<accession>C3K1A0</accession>